<name>NPD1_COREF</name>
<organism>
    <name type="scientific">Corynebacterium efficiens (strain DSM 44549 / YS-314 / AJ 12310 / JCM 11189 / NBRC 100395)</name>
    <dbReference type="NCBI Taxonomy" id="196164"/>
    <lineage>
        <taxon>Bacteria</taxon>
        <taxon>Bacillati</taxon>
        <taxon>Actinomycetota</taxon>
        <taxon>Actinomycetes</taxon>
        <taxon>Mycobacteriales</taxon>
        <taxon>Corynebacteriaceae</taxon>
        <taxon>Corynebacterium</taxon>
    </lineage>
</organism>
<proteinExistence type="inferred from homology"/>
<keyword id="KW-0963">Cytoplasm</keyword>
<keyword id="KW-0479">Metal-binding</keyword>
<keyword id="KW-0520">NAD</keyword>
<keyword id="KW-1185">Reference proteome</keyword>
<keyword id="KW-0808">Transferase</keyword>
<keyword id="KW-0862">Zinc</keyword>
<accession>Q8FUC8</accession>
<reference key="1">
    <citation type="journal article" date="2003" name="Genome Res.">
        <title>Comparative complete genome sequence analysis of the amino acid replacements responsible for the thermostability of Corynebacterium efficiens.</title>
        <authorList>
            <person name="Nishio Y."/>
            <person name="Nakamura Y."/>
            <person name="Kawarabayasi Y."/>
            <person name="Usuda Y."/>
            <person name="Kimura E."/>
            <person name="Sugimoto S."/>
            <person name="Matsui K."/>
            <person name="Yamagishi A."/>
            <person name="Kikuchi H."/>
            <person name="Ikeo K."/>
            <person name="Gojobori T."/>
        </authorList>
    </citation>
    <scope>NUCLEOTIDE SEQUENCE [LARGE SCALE GENOMIC DNA]</scope>
    <source>
        <strain>DSM 44549 / YS-314 / AJ 12310 / JCM 11189 / NBRC 100395</strain>
    </source>
</reference>
<gene>
    <name evidence="1" type="primary">cobB1</name>
    <name type="ordered locus">CE0092</name>
</gene>
<comment type="function">
    <text evidence="1">NAD-dependent protein deacetylase which modulates the activities of several enzymes which are inactive in their acetylated form.</text>
</comment>
<comment type="catalytic activity">
    <reaction evidence="1">
        <text>N(6)-acetyl-L-lysyl-[protein] + NAD(+) + H2O = 2''-O-acetyl-ADP-D-ribose + nicotinamide + L-lysyl-[protein]</text>
        <dbReference type="Rhea" id="RHEA:43636"/>
        <dbReference type="Rhea" id="RHEA-COMP:9752"/>
        <dbReference type="Rhea" id="RHEA-COMP:10731"/>
        <dbReference type="ChEBI" id="CHEBI:15377"/>
        <dbReference type="ChEBI" id="CHEBI:17154"/>
        <dbReference type="ChEBI" id="CHEBI:29969"/>
        <dbReference type="ChEBI" id="CHEBI:57540"/>
        <dbReference type="ChEBI" id="CHEBI:61930"/>
        <dbReference type="ChEBI" id="CHEBI:83767"/>
        <dbReference type="EC" id="2.3.1.286"/>
    </reaction>
</comment>
<comment type="cofactor">
    <cofactor evidence="1">
        <name>Zn(2+)</name>
        <dbReference type="ChEBI" id="CHEBI:29105"/>
    </cofactor>
    <text evidence="1">Binds 1 zinc ion per subunit.</text>
</comment>
<comment type="subcellular location">
    <subcellularLocation>
        <location evidence="1">Cytoplasm</location>
    </subcellularLocation>
</comment>
<comment type="similarity">
    <text evidence="1">Belongs to the sirtuin family. Class II subfamily.</text>
</comment>
<comment type="sequence caution" evidence="3">
    <conflict type="erroneous initiation">
        <sequence resource="EMBL-CDS" id="BAC16902"/>
    </conflict>
    <text>Extended N-terminus.</text>
</comment>
<sequence length="281" mass="30298">MEEGAALEGVVKLLEAGSVLAVTGAGVSTDSGIPDYRSPRGSLNQGRPMTYQEFRFDPVASHRYWARSFVGWRVMADAQPNRTHYALVELERAGLLSGIVTQNVDGLHRRAGSENLVALHGDLATIVCLQCGHREARELLDARLDHLNPGYFDSIALDPSAVNPDGDVTLDDHHVQRFTMAGCARCGSVLLKPDVVYFGEPVPSIRKTRVAQLLDGADAVVVAGSSLAVMSGYRIVIEAQRAGKPVAVINGGPGRADHRVDILWRTRVGPAFDQILDALDL</sequence>
<evidence type="ECO:0000255" key="1">
    <source>
        <dbReference type="HAMAP-Rule" id="MF_01967"/>
    </source>
</evidence>
<evidence type="ECO:0000255" key="2">
    <source>
        <dbReference type="PROSITE-ProRule" id="PRU00236"/>
    </source>
</evidence>
<evidence type="ECO:0000305" key="3"/>
<feature type="chain" id="PRO_0000110308" description="NAD-dependent protein deacetylase 1">
    <location>
        <begin position="1"/>
        <end position="281"/>
    </location>
</feature>
<feature type="domain" description="Deacetylase sirtuin-type" evidence="2">
    <location>
        <begin position="1"/>
        <end position="281"/>
    </location>
</feature>
<feature type="active site" description="Proton acceptor" evidence="2">
    <location>
        <position position="120"/>
    </location>
</feature>
<feature type="binding site" evidence="1">
    <location>
        <begin position="24"/>
        <end position="44"/>
    </location>
    <ligand>
        <name>NAD(+)</name>
        <dbReference type="ChEBI" id="CHEBI:57540"/>
    </ligand>
</feature>
<feature type="binding site" evidence="1">
    <location>
        <begin position="102"/>
        <end position="105"/>
    </location>
    <ligand>
        <name>NAD(+)</name>
        <dbReference type="ChEBI" id="CHEBI:57540"/>
    </ligand>
</feature>
<feature type="binding site" evidence="1">
    <location>
        <position position="128"/>
    </location>
    <ligand>
        <name>Zn(2+)</name>
        <dbReference type="ChEBI" id="CHEBI:29105"/>
    </ligand>
</feature>
<feature type="binding site" evidence="1">
    <location>
        <position position="131"/>
    </location>
    <ligand>
        <name>Zn(2+)</name>
        <dbReference type="ChEBI" id="CHEBI:29105"/>
    </ligand>
</feature>
<feature type="binding site" evidence="1">
    <location>
        <position position="183"/>
    </location>
    <ligand>
        <name>Zn(2+)</name>
        <dbReference type="ChEBI" id="CHEBI:29105"/>
    </ligand>
</feature>
<feature type="binding site" evidence="1">
    <location>
        <position position="186"/>
    </location>
    <ligand>
        <name>Zn(2+)</name>
        <dbReference type="ChEBI" id="CHEBI:29105"/>
    </ligand>
</feature>
<feature type="binding site" evidence="1">
    <location>
        <begin position="224"/>
        <end position="226"/>
    </location>
    <ligand>
        <name>NAD(+)</name>
        <dbReference type="ChEBI" id="CHEBI:57540"/>
    </ligand>
</feature>
<feature type="binding site" evidence="1">
    <location>
        <begin position="250"/>
        <end position="252"/>
    </location>
    <ligand>
        <name>NAD(+)</name>
        <dbReference type="ChEBI" id="CHEBI:57540"/>
    </ligand>
</feature>
<feature type="binding site" evidence="1">
    <location>
        <position position="268"/>
    </location>
    <ligand>
        <name>NAD(+)</name>
        <dbReference type="ChEBI" id="CHEBI:57540"/>
    </ligand>
</feature>
<protein>
    <recommendedName>
        <fullName evidence="1">NAD-dependent protein deacetylase 1</fullName>
        <ecNumber evidence="1 2">2.3.1.286</ecNumber>
    </recommendedName>
    <alternativeName>
        <fullName evidence="1">Regulatory protein SIR2 homolog 1</fullName>
    </alternativeName>
</protein>
<dbReference type="EC" id="2.3.1.286" evidence="1 2"/>
<dbReference type="EMBL" id="BA000035">
    <property type="protein sequence ID" value="BAC16902.1"/>
    <property type="status" value="ALT_INIT"/>
    <property type="molecule type" value="Genomic_DNA"/>
</dbReference>
<dbReference type="SMR" id="Q8FUC8"/>
<dbReference type="STRING" id="196164.gene:10740482"/>
<dbReference type="KEGG" id="cef:CE0092"/>
<dbReference type="eggNOG" id="COG0846">
    <property type="taxonomic scope" value="Bacteria"/>
</dbReference>
<dbReference type="HOGENOM" id="CLU_023643_3_2_11"/>
<dbReference type="Proteomes" id="UP000001409">
    <property type="component" value="Chromosome"/>
</dbReference>
<dbReference type="GO" id="GO:0005737">
    <property type="term" value="C:cytoplasm"/>
    <property type="evidence" value="ECO:0007669"/>
    <property type="project" value="UniProtKB-SubCell"/>
</dbReference>
<dbReference type="GO" id="GO:0017136">
    <property type="term" value="F:histone deacetylase activity, NAD-dependent"/>
    <property type="evidence" value="ECO:0007669"/>
    <property type="project" value="TreeGrafter"/>
</dbReference>
<dbReference type="GO" id="GO:0070403">
    <property type="term" value="F:NAD+ binding"/>
    <property type="evidence" value="ECO:0007669"/>
    <property type="project" value="UniProtKB-UniRule"/>
</dbReference>
<dbReference type="GO" id="GO:0008270">
    <property type="term" value="F:zinc ion binding"/>
    <property type="evidence" value="ECO:0007669"/>
    <property type="project" value="UniProtKB-UniRule"/>
</dbReference>
<dbReference type="CDD" id="cd01409">
    <property type="entry name" value="SIRT4"/>
    <property type="match status" value="1"/>
</dbReference>
<dbReference type="Gene3D" id="3.30.1600.10">
    <property type="entry name" value="SIR2/SIRT2 'Small Domain"/>
    <property type="match status" value="1"/>
</dbReference>
<dbReference type="Gene3D" id="3.40.50.1220">
    <property type="entry name" value="TPP-binding domain"/>
    <property type="match status" value="1"/>
</dbReference>
<dbReference type="HAMAP" id="MF_01967">
    <property type="entry name" value="Sirtuin_ClassII"/>
    <property type="match status" value="1"/>
</dbReference>
<dbReference type="InterPro" id="IPR029035">
    <property type="entry name" value="DHS-like_NAD/FAD-binding_dom"/>
</dbReference>
<dbReference type="InterPro" id="IPR050134">
    <property type="entry name" value="NAD-dep_sirtuin_deacylases"/>
</dbReference>
<dbReference type="InterPro" id="IPR003000">
    <property type="entry name" value="Sirtuin"/>
</dbReference>
<dbReference type="InterPro" id="IPR026591">
    <property type="entry name" value="Sirtuin_cat_small_dom_sf"/>
</dbReference>
<dbReference type="InterPro" id="IPR026587">
    <property type="entry name" value="Sirtuin_class_II"/>
</dbReference>
<dbReference type="InterPro" id="IPR026590">
    <property type="entry name" value="Ssirtuin_cat_dom"/>
</dbReference>
<dbReference type="PANTHER" id="PTHR11085">
    <property type="entry name" value="NAD-DEPENDENT PROTEIN DEACYLASE SIRTUIN-5, MITOCHONDRIAL-RELATED"/>
    <property type="match status" value="1"/>
</dbReference>
<dbReference type="PANTHER" id="PTHR11085:SF10">
    <property type="entry name" value="NAD-DEPENDENT PROTEIN DEACYLASE SIRTUIN-5, MITOCHONDRIAL-RELATED"/>
    <property type="match status" value="1"/>
</dbReference>
<dbReference type="Pfam" id="PF02146">
    <property type="entry name" value="SIR2"/>
    <property type="match status" value="1"/>
</dbReference>
<dbReference type="SUPFAM" id="SSF52467">
    <property type="entry name" value="DHS-like NAD/FAD-binding domain"/>
    <property type="match status" value="1"/>
</dbReference>
<dbReference type="PROSITE" id="PS50305">
    <property type="entry name" value="SIRTUIN"/>
    <property type="match status" value="1"/>
</dbReference>